<accession>B0RN85</accession>
<comment type="cofactor">
    <cofactor evidence="1">
        <name>FMN</name>
        <dbReference type="ChEBI" id="CHEBI:58210"/>
    </cofactor>
</comment>
<comment type="similarity">
    <text evidence="1">Belongs to the nitroreductase family. HadB/RutE subfamily.</text>
</comment>
<keyword id="KW-0285">Flavoprotein</keyword>
<keyword id="KW-0288">FMN</keyword>
<keyword id="KW-0520">NAD</keyword>
<keyword id="KW-0521">NADP</keyword>
<keyword id="KW-0560">Oxidoreductase</keyword>
<feature type="chain" id="PRO_1000138705" description="Putative NADH dehydrogenase/NAD(P)H nitroreductase xcc-b100_0585">
    <location>
        <begin position="1"/>
        <end position="196"/>
    </location>
</feature>
<organism>
    <name type="scientific">Xanthomonas campestris pv. campestris (strain B100)</name>
    <dbReference type="NCBI Taxonomy" id="509169"/>
    <lineage>
        <taxon>Bacteria</taxon>
        <taxon>Pseudomonadati</taxon>
        <taxon>Pseudomonadota</taxon>
        <taxon>Gammaproteobacteria</taxon>
        <taxon>Lysobacterales</taxon>
        <taxon>Lysobacteraceae</taxon>
        <taxon>Xanthomonas</taxon>
    </lineage>
</organism>
<name>Y585_XANCB</name>
<gene>
    <name type="ordered locus">xcc-b100_0585</name>
</gene>
<protein>
    <recommendedName>
        <fullName evidence="1">Putative NADH dehydrogenase/NAD(P)H nitroreductase xcc-b100_0585</fullName>
        <ecNumber evidence="1">1.-.-.-</ecNumber>
    </recommendedName>
</protein>
<dbReference type="EC" id="1.-.-.-" evidence="1"/>
<dbReference type="EMBL" id="AM920689">
    <property type="protein sequence ID" value="CAP49920.1"/>
    <property type="molecule type" value="Genomic_DNA"/>
</dbReference>
<dbReference type="SMR" id="B0RN85"/>
<dbReference type="KEGG" id="xca:xcc-b100_0585"/>
<dbReference type="HOGENOM" id="CLU_084441_0_0_6"/>
<dbReference type="Proteomes" id="UP000001188">
    <property type="component" value="Chromosome"/>
</dbReference>
<dbReference type="GO" id="GO:0016491">
    <property type="term" value="F:oxidoreductase activity"/>
    <property type="evidence" value="ECO:0007669"/>
    <property type="project" value="UniProtKB-UniRule"/>
</dbReference>
<dbReference type="CDD" id="cd02148">
    <property type="entry name" value="RutE-like"/>
    <property type="match status" value="1"/>
</dbReference>
<dbReference type="Gene3D" id="3.40.109.10">
    <property type="entry name" value="NADH Oxidase"/>
    <property type="match status" value="1"/>
</dbReference>
<dbReference type="HAMAP" id="MF_01204">
    <property type="entry name" value="Oxidoreductase_RutE_HadB"/>
    <property type="match status" value="1"/>
</dbReference>
<dbReference type="InterPro" id="IPR029479">
    <property type="entry name" value="Nitroreductase"/>
</dbReference>
<dbReference type="InterPro" id="IPR000415">
    <property type="entry name" value="Nitroreductase-like"/>
</dbReference>
<dbReference type="InterPro" id="IPR050461">
    <property type="entry name" value="Nitroreductase_HadB/RutE"/>
</dbReference>
<dbReference type="InterPro" id="IPR023936">
    <property type="entry name" value="RutE-like"/>
</dbReference>
<dbReference type="NCBIfam" id="NF003768">
    <property type="entry name" value="PRK05365.1"/>
    <property type="match status" value="1"/>
</dbReference>
<dbReference type="PANTHER" id="PTHR43543">
    <property type="entry name" value="MALONIC SEMIALDEHYDE REDUCTASE RUTE-RELATED"/>
    <property type="match status" value="1"/>
</dbReference>
<dbReference type="PANTHER" id="PTHR43543:SF1">
    <property type="entry name" value="MALONIC SEMIALDEHYDE REDUCTASE RUTE-RELATED"/>
    <property type="match status" value="1"/>
</dbReference>
<dbReference type="Pfam" id="PF00881">
    <property type="entry name" value="Nitroreductase"/>
    <property type="match status" value="1"/>
</dbReference>
<dbReference type="SUPFAM" id="SSF55469">
    <property type="entry name" value="FMN-dependent nitroreductase-like"/>
    <property type="match status" value="1"/>
</dbReference>
<proteinExistence type="inferred from homology"/>
<sequence>MSDLLNAAALDQLFRTARTQNAFLDTPVSEDLLRELYDLVKWGPTAANGSPARFVFVTTAEGKEKLKPALSEGNAAKTLAAPVTAIIGFDEDFHEKLPYLFPHADAKSWFDGPRTARTESAFRNSSLQGAYLILAARALGLDAGPMSGFDNAKVDAAFFAGTPIKSNFLVNLGYGDPAGLFPRLPRLSFDEAARIA</sequence>
<reference key="1">
    <citation type="journal article" date="2008" name="J. Biotechnol.">
        <title>The genome of Xanthomonas campestris pv. campestris B100 and its use for the reconstruction of metabolic pathways involved in xanthan biosynthesis.</title>
        <authorList>
            <person name="Vorhoelter F.-J."/>
            <person name="Schneiker S."/>
            <person name="Goesmann A."/>
            <person name="Krause L."/>
            <person name="Bekel T."/>
            <person name="Kaiser O."/>
            <person name="Linke B."/>
            <person name="Patschkowski T."/>
            <person name="Rueckert C."/>
            <person name="Schmid J."/>
            <person name="Sidhu V.K."/>
            <person name="Sieber V."/>
            <person name="Tauch A."/>
            <person name="Watt S.A."/>
            <person name="Weisshaar B."/>
            <person name="Becker A."/>
            <person name="Niehaus K."/>
            <person name="Puehler A."/>
        </authorList>
    </citation>
    <scope>NUCLEOTIDE SEQUENCE [LARGE SCALE GENOMIC DNA]</scope>
    <source>
        <strain>B100</strain>
    </source>
</reference>
<evidence type="ECO:0000255" key="1">
    <source>
        <dbReference type="HAMAP-Rule" id="MF_01204"/>
    </source>
</evidence>